<evidence type="ECO:0000255" key="1">
    <source>
        <dbReference type="HAMAP-Rule" id="MF_00444"/>
    </source>
</evidence>
<name>CLPP_YERPN</name>
<sequence length="207" mass="23320">MSYSGERDQFAPNMALVPMVVEQTSRGERSYDIFSRLLKERIIFLTGQVEDHMANLITAQMLFLEAENPEKDIFLYINSPGGVITAGMSIYDTMQFIKPDVSTICMGQACSMGAFLLTAGAKGKRFCLPNSRVMIHQPLGGFQGQATDIEIHAKEILKVKSRMNELMAYHTGKSLEEIERDTERDRFLSAEQSVEYGLVDSVFTRRD</sequence>
<proteinExistence type="inferred from homology"/>
<accession>Q1CL65</accession>
<accession>C4GQK9</accession>
<feature type="chain" id="PRO_1000026147" description="ATP-dependent Clp protease proteolytic subunit">
    <location>
        <begin position="1"/>
        <end position="207"/>
    </location>
</feature>
<feature type="active site" description="Nucleophile" evidence="1">
    <location>
        <position position="111"/>
    </location>
</feature>
<feature type="active site" evidence="1">
    <location>
        <position position="136"/>
    </location>
</feature>
<reference key="1">
    <citation type="journal article" date="2006" name="J. Bacteriol.">
        <title>Complete genome sequence of Yersinia pestis strains Antiqua and Nepal516: evidence of gene reduction in an emerging pathogen.</title>
        <authorList>
            <person name="Chain P.S.G."/>
            <person name="Hu P."/>
            <person name="Malfatti S.A."/>
            <person name="Radnedge L."/>
            <person name="Larimer F."/>
            <person name="Vergez L.M."/>
            <person name="Worsham P."/>
            <person name="Chu M.C."/>
            <person name="Andersen G.L."/>
        </authorList>
    </citation>
    <scope>NUCLEOTIDE SEQUENCE [LARGE SCALE GENOMIC DNA]</scope>
    <source>
        <strain>Nepal516</strain>
    </source>
</reference>
<reference key="2">
    <citation type="submission" date="2009-04" db="EMBL/GenBank/DDBJ databases">
        <title>Yersinia pestis Nepal516A whole genome shotgun sequencing project.</title>
        <authorList>
            <person name="Plunkett G. III"/>
            <person name="Anderson B.D."/>
            <person name="Baumler D.J."/>
            <person name="Burland V."/>
            <person name="Cabot E.L."/>
            <person name="Glasner J.D."/>
            <person name="Mau B."/>
            <person name="Neeno-Eckwall E."/>
            <person name="Perna N.T."/>
            <person name="Munk A.C."/>
            <person name="Tapia R."/>
            <person name="Green L.D."/>
            <person name="Rogers Y.C."/>
            <person name="Detter J.C."/>
            <person name="Bruce D.C."/>
            <person name="Brettin T.S."/>
        </authorList>
    </citation>
    <scope>NUCLEOTIDE SEQUENCE [LARGE SCALE GENOMIC DNA]</scope>
    <source>
        <strain>Nepal516</strain>
    </source>
</reference>
<organism>
    <name type="scientific">Yersinia pestis bv. Antiqua (strain Nepal516)</name>
    <dbReference type="NCBI Taxonomy" id="377628"/>
    <lineage>
        <taxon>Bacteria</taxon>
        <taxon>Pseudomonadati</taxon>
        <taxon>Pseudomonadota</taxon>
        <taxon>Gammaproteobacteria</taxon>
        <taxon>Enterobacterales</taxon>
        <taxon>Yersiniaceae</taxon>
        <taxon>Yersinia</taxon>
    </lineage>
</organism>
<gene>
    <name evidence="1" type="primary">clpP</name>
    <name type="ordered locus">YPN_0933</name>
    <name type="ORF">YP516_1011</name>
</gene>
<comment type="function">
    <text evidence="1">Cleaves peptides in various proteins in a process that requires ATP hydrolysis. Has a chymotrypsin-like activity. Plays a major role in the degradation of misfolded proteins.</text>
</comment>
<comment type="catalytic activity">
    <reaction evidence="1">
        <text>Hydrolysis of proteins to small peptides in the presence of ATP and magnesium. alpha-casein is the usual test substrate. In the absence of ATP, only oligopeptides shorter than five residues are hydrolyzed (such as succinyl-Leu-Tyr-|-NHMec, and Leu-Tyr-Leu-|-Tyr-Trp, in which cleavage of the -Tyr-|-Leu- and -Tyr-|-Trp bonds also occurs).</text>
        <dbReference type="EC" id="3.4.21.92"/>
    </reaction>
</comment>
<comment type="subunit">
    <text evidence="1">Fourteen ClpP subunits assemble into 2 heptameric rings which stack back to back to give a disk-like structure with a central cavity, resembling the structure of eukaryotic proteasomes.</text>
</comment>
<comment type="subcellular location">
    <subcellularLocation>
        <location evidence="1">Cytoplasm</location>
    </subcellularLocation>
</comment>
<comment type="similarity">
    <text evidence="1">Belongs to the peptidase S14 family.</text>
</comment>
<keyword id="KW-0963">Cytoplasm</keyword>
<keyword id="KW-0378">Hydrolase</keyword>
<keyword id="KW-0645">Protease</keyword>
<keyword id="KW-0720">Serine protease</keyword>
<protein>
    <recommendedName>
        <fullName evidence="1">ATP-dependent Clp protease proteolytic subunit</fullName>
        <ecNumber evidence="1">3.4.21.92</ecNumber>
    </recommendedName>
    <alternativeName>
        <fullName evidence="1">Endopeptidase Clp</fullName>
    </alternativeName>
</protein>
<dbReference type="EC" id="3.4.21.92" evidence="1"/>
<dbReference type="EMBL" id="CP000305">
    <property type="protein sequence ID" value="ABG17265.1"/>
    <property type="molecule type" value="Genomic_DNA"/>
</dbReference>
<dbReference type="EMBL" id="ACNQ01000008">
    <property type="protein sequence ID" value="EEO77350.1"/>
    <property type="molecule type" value="Genomic_DNA"/>
</dbReference>
<dbReference type="RefSeq" id="WP_002208642.1">
    <property type="nucleotide sequence ID" value="NZ_ACNQ01000008.1"/>
</dbReference>
<dbReference type="SMR" id="Q1CL65"/>
<dbReference type="MEROPS" id="S14.001"/>
<dbReference type="GeneID" id="96664465"/>
<dbReference type="KEGG" id="ypn:YPN_0933"/>
<dbReference type="HOGENOM" id="CLU_058707_3_2_6"/>
<dbReference type="Proteomes" id="UP000008936">
    <property type="component" value="Chromosome"/>
</dbReference>
<dbReference type="GO" id="GO:0005737">
    <property type="term" value="C:cytoplasm"/>
    <property type="evidence" value="ECO:0007669"/>
    <property type="project" value="UniProtKB-SubCell"/>
</dbReference>
<dbReference type="GO" id="GO:0009368">
    <property type="term" value="C:endopeptidase Clp complex"/>
    <property type="evidence" value="ECO:0007669"/>
    <property type="project" value="TreeGrafter"/>
</dbReference>
<dbReference type="GO" id="GO:0004176">
    <property type="term" value="F:ATP-dependent peptidase activity"/>
    <property type="evidence" value="ECO:0007669"/>
    <property type="project" value="InterPro"/>
</dbReference>
<dbReference type="GO" id="GO:0051117">
    <property type="term" value="F:ATPase binding"/>
    <property type="evidence" value="ECO:0007669"/>
    <property type="project" value="TreeGrafter"/>
</dbReference>
<dbReference type="GO" id="GO:0004252">
    <property type="term" value="F:serine-type endopeptidase activity"/>
    <property type="evidence" value="ECO:0007669"/>
    <property type="project" value="UniProtKB-UniRule"/>
</dbReference>
<dbReference type="GO" id="GO:0006515">
    <property type="term" value="P:protein quality control for misfolded or incompletely synthesized proteins"/>
    <property type="evidence" value="ECO:0007669"/>
    <property type="project" value="TreeGrafter"/>
</dbReference>
<dbReference type="CDD" id="cd07017">
    <property type="entry name" value="S14_ClpP_2"/>
    <property type="match status" value="1"/>
</dbReference>
<dbReference type="FunFam" id="3.90.226.10:FF:000001">
    <property type="entry name" value="ATP-dependent Clp protease proteolytic subunit"/>
    <property type="match status" value="1"/>
</dbReference>
<dbReference type="Gene3D" id="3.90.226.10">
    <property type="entry name" value="2-enoyl-CoA Hydratase, Chain A, domain 1"/>
    <property type="match status" value="1"/>
</dbReference>
<dbReference type="HAMAP" id="MF_00444">
    <property type="entry name" value="ClpP"/>
    <property type="match status" value="1"/>
</dbReference>
<dbReference type="InterPro" id="IPR001907">
    <property type="entry name" value="ClpP"/>
</dbReference>
<dbReference type="InterPro" id="IPR029045">
    <property type="entry name" value="ClpP/crotonase-like_dom_sf"/>
</dbReference>
<dbReference type="InterPro" id="IPR023562">
    <property type="entry name" value="ClpP/TepA"/>
</dbReference>
<dbReference type="InterPro" id="IPR033135">
    <property type="entry name" value="ClpP_His_AS"/>
</dbReference>
<dbReference type="InterPro" id="IPR018215">
    <property type="entry name" value="ClpP_Ser_AS"/>
</dbReference>
<dbReference type="NCBIfam" id="TIGR00493">
    <property type="entry name" value="clpP"/>
    <property type="match status" value="1"/>
</dbReference>
<dbReference type="NCBIfam" id="NF001368">
    <property type="entry name" value="PRK00277.1"/>
    <property type="match status" value="1"/>
</dbReference>
<dbReference type="NCBIfam" id="NF009205">
    <property type="entry name" value="PRK12553.1"/>
    <property type="match status" value="1"/>
</dbReference>
<dbReference type="PANTHER" id="PTHR10381">
    <property type="entry name" value="ATP-DEPENDENT CLP PROTEASE PROTEOLYTIC SUBUNIT"/>
    <property type="match status" value="1"/>
</dbReference>
<dbReference type="PANTHER" id="PTHR10381:SF70">
    <property type="entry name" value="ATP-DEPENDENT CLP PROTEASE PROTEOLYTIC SUBUNIT"/>
    <property type="match status" value="1"/>
</dbReference>
<dbReference type="Pfam" id="PF00574">
    <property type="entry name" value="CLP_protease"/>
    <property type="match status" value="1"/>
</dbReference>
<dbReference type="PRINTS" id="PR00127">
    <property type="entry name" value="CLPPROTEASEP"/>
</dbReference>
<dbReference type="SUPFAM" id="SSF52096">
    <property type="entry name" value="ClpP/crotonase"/>
    <property type="match status" value="1"/>
</dbReference>
<dbReference type="PROSITE" id="PS00382">
    <property type="entry name" value="CLP_PROTEASE_HIS"/>
    <property type="match status" value="1"/>
</dbReference>
<dbReference type="PROSITE" id="PS00381">
    <property type="entry name" value="CLP_PROTEASE_SER"/>
    <property type="match status" value="1"/>
</dbReference>